<accession>Q8IN43</accession>
<accession>Q962D9</accession>
<reference evidence="3 4" key="1">
    <citation type="journal article" date="2001" name="Biochem. Biophys. Res. Commun.">
        <title>A family of Turandot-related genes in the humoral stress response of Drosophila.</title>
        <authorList>
            <person name="Ekengren S."/>
            <person name="Hultmark D."/>
        </authorList>
    </citation>
    <scope>NUCLEOTIDE SEQUENCE [MRNA]</scope>
    <scope>POSSIBLE FUNCTION</scope>
    <scope>DEVELOPMENTAL STAGE</scope>
    <scope>INDUCTION</scope>
    <source>
        <strain evidence="4">Canton-S</strain>
    </source>
</reference>
<reference evidence="5" key="2">
    <citation type="journal article" date="2000" name="Science">
        <title>The genome sequence of Drosophila melanogaster.</title>
        <authorList>
            <person name="Adams M.D."/>
            <person name="Celniker S.E."/>
            <person name="Holt R.A."/>
            <person name="Evans C.A."/>
            <person name="Gocayne J.D."/>
            <person name="Amanatides P.G."/>
            <person name="Scherer S.E."/>
            <person name="Li P.W."/>
            <person name="Hoskins R.A."/>
            <person name="Galle R.F."/>
            <person name="George R.A."/>
            <person name="Lewis S.E."/>
            <person name="Richards S."/>
            <person name="Ashburner M."/>
            <person name="Henderson S.N."/>
            <person name="Sutton G.G."/>
            <person name="Wortman J.R."/>
            <person name="Yandell M.D."/>
            <person name="Zhang Q."/>
            <person name="Chen L.X."/>
            <person name="Brandon R.C."/>
            <person name="Rogers Y.-H.C."/>
            <person name="Blazej R.G."/>
            <person name="Champe M."/>
            <person name="Pfeiffer B.D."/>
            <person name="Wan K.H."/>
            <person name="Doyle C."/>
            <person name="Baxter E.G."/>
            <person name="Helt G."/>
            <person name="Nelson C.R."/>
            <person name="Miklos G.L.G."/>
            <person name="Abril J.F."/>
            <person name="Agbayani A."/>
            <person name="An H.-J."/>
            <person name="Andrews-Pfannkoch C."/>
            <person name="Baldwin D."/>
            <person name="Ballew R.M."/>
            <person name="Basu A."/>
            <person name="Baxendale J."/>
            <person name="Bayraktaroglu L."/>
            <person name="Beasley E.M."/>
            <person name="Beeson K.Y."/>
            <person name="Benos P.V."/>
            <person name="Berman B.P."/>
            <person name="Bhandari D."/>
            <person name="Bolshakov S."/>
            <person name="Borkova D."/>
            <person name="Botchan M.R."/>
            <person name="Bouck J."/>
            <person name="Brokstein P."/>
            <person name="Brottier P."/>
            <person name="Burtis K.C."/>
            <person name="Busam D.A."/>
            <person name="Butler H."/>
            <person name="Cadieu E."/>
            <person name="Center A."/>
            <person name="Chandra I."/>
            <person name="Cherry J.M."/>
            <person name="Cawley S."/>
            <person name="Dahlke C."/>
            <person name="Davenport L.B."/>
            <person name="Davies P."/>
            <person name="de Pablos B."/>
            <person name="Delcher A."/>
            <person name="Deng Z."/>
            <person name="Mays A.D."/>
            <person name="Dew I."/>
            <person name="Dietz S.M."/>
            <person name="Dodson K."/>
            <person name="Doup L.E."/>
            <person name="Downes M."/>
            <person name="Dugan-Rocha S."/>
            <person name="Dunkov B.C."/>
            <person name="Dunn P."/>
            <person name="Durbin K.J."/>
            <person name="Evangelista C.C."/>
            <person name="Ferraz C."/>
            <person name="Ferriera S."/>
            <person name="Fleischmann W."/>
            <person name="Fosler C."/>
            <person name="Gabrielian A.E."/>
            <person name="Garg N.S."/>
            <person name="Gelbart W.M."/>
            <person name="Glasser K."/>
            <person name="Glodek A."/>
            <person name="Gong F."/>
            <person name="Gorrell J.H."/>
            <person name="Gu Z."/>
            <person name="Guan P."/>
            <person name="Harris M."/>
            <person name="Harris N.L."/>
            <person name="Harvey D.A."/>
            <person name="Heiman T.J."/>
            <person name="Hernandez J.R."/>
            <person name="Houck J."/>
            <person name="Hostin D."/>
            <person name="Houston K.A."/>
            <person name="Howland T.J."/>
            <person name="Wei M.-H."/>
            <person name="Ibegwam C."/>
            <person name="Jalali M."/>
            <person name="Kalush F."/>
            <person name="Karpen G.H."/>
            <person name="Ke Z."/>
            <person name="Kennison J.A."/>
            <person name="Ketchum K.A."/>
            <person name="Kimmel B.E."/>
            <person name="Kodira C.D."/>
            <person name="Kraft C.L."/>
            <person name="Kravitz S."/>
            <person name="Kulp D."/>
            <person name="Lai Z."/>
            <person name="Lasko P."/>
            <person name="Lei Y."/>
            <person name="Levitsky A.A."/>
            <person name="Li J.H."/>
            <person name="Li Z."/>
            <person name="Liang Y."/>
            <person name="Lin X."/>
            <person name="Liu X."/>
            <person name="Mattei B."/>
            <person name="McIntosh T.C."/>
            <person name="McLeod M.P."/>
            <person name="McPherson D."/>
            <person name="Merkulov G."/>
            <person name="Milshina N.V."/>
            <person name="Mobarry C."/>
            <person name="Morris J."/>
            <person name="Moshrefi A."/>
            <person name="Mount S.M."/>
            <person name="Moy M."/>
            <person name="Murphy B."/>
            <person name="Murphy L."/>
            <person name="Muzny D.M."/>
            <person name="Nelson D.L."/>
            <person name="Nelson D.R."/>
            <person name="Nelson K.A."/>
            <person name="Nixon K."/>
            <person name="Nusskern D.R."/>
            <person name="Pacleb J.M."/>
            <person name="Palazzolo M."/>
            <person name="Pittman G.S."/>
            <person name="Pan S."/>
            <person name="Pollard J."/>
            <person name="Puri V."/>
            <person name="Reese M.G."/>
            <person name="Reinert K."/>
            <person name="Remington K."/>
            <person name="Saunders R.D.C."/>
            <person name="Scheeler F."/>
            <person name="Shen H."/>
            <person name="Shue B.C."/>
            <person name="Siden-Kiamos I."/>
            <person name="Simpson M."/>
            <person name="Skupski M.P."/>
            <person name="Smith T.J."/>
            <person name="Spier E."/>
            <person name="Spradling A.C."/>
            <person name="Stapleton M."/>
            <person name="Strong R."/>
            <person name="Sun E."/>
            <person name="Svirskas R."/>
            <person name="Tector C."/>
            <person name="Turner R."/>
            <person name="Venter E."/>
            <person name="Wang A.H."/>
            <person name="Wang X."/>
            <person name="Wang Z.-Y."/>
            <person name="Wassarman D.A."/>
            <person name="Weinstock G.M."/>
            <person name="Weissenbach J."/>
            <person name="Williams S.M."/>
            <person name="Woodage T."/>
            <person name="Worley K.C."/>
            <person name="Wu D."/>
            <person name="Yang S."/>
            <person name="Yao Q.A."/>
            <person name="Ye J."/>
            <person name="Yeh R.-F."/>
            <person name="Zaveri J.S."/>
            <person name="Zhan M."/>
            <person name="Zhang G."/>
            <person name="Zhao Q."/>
            <person name="Zheng L."/>
            <person name="Zheng X.H."/>
            <person name="Zhong F.N."/>
            <person name="Zhong W."/>
            <person name="Zhou X."/>
            <person name="Zhu S.C."/>
            <person name="Zhu X."/>
            <person name="Smith H.O."/>
            <person name="Gibbs R.A."/>
            <person name="Myers E.W."/>
            <person name="Rubin G.M."/>
            <person name="Venter J.C."/>
        </authorList>
    </citation>
    <scope>NUCLEOTIDE SEQUENCE [LARGE SCALE GENOMIC DNA]</scope>
    <source>
        <strain>Berkeley</strain>
    </source>
</reference>
<reference evidence="3 5" key="3">
    <citation type="journal article" date="2002" name="Genome Biol.">
        <title>Annotation of the Drosophila melanogaster euchromatic genome: a systematic review.</title>
        <authorList>
            <person name="Misra S."/>
            <person name="Crosby M.A."/>
            <person name="Mungall C.J."/>
            <person name="Matthews B.B."/>
            <person name="Campbell K.S."/>
            <person name="Hradecky P."/>
            <person name="Huang Y."/>
            <person name="Kaminker J.S."/>
            <person name="Millburn G.H."/>
            <person name="Prochnik S.E."/>
            <person name="Smith C.D."/>
            <person name="Tupy J.L."/>
            <person name="Whitfield E.J."/>
            <person name="Bayraktaroglu L."/>
            <person name="Berman B.P."/>
            <person name="Bettencourt B.R."/>
            <person name="Celniker S.E."/>
            <person name="de Grey A.D.N.J."/>
            <person name="Drysdale R.A."/>
            <person name="Harris N.L."/>
            <person name="Richter J."/>
            <person name="Russo S."/>
            <person name="Schroeder A.J."/>
            <person name="Shu S.Q."/>
            <person name="Stapleton M."/>
            <person name="Yamada C."/>
            <person name="Ashburner M."/>
            <person name="Gelbart W.M."/>
            <person name="Rubin G.M."/>
            <person name="Lewis S.E."/>
        </authorList>
    </citation>
    <scope>GENOME REANNOTATION</scope>
    <source>
        <strain>Berkeley</strain>
    </source>
</reference>
<reference evidence="6" key="4">
    <citation type="submission" date="2005-05" db="EMBL/GenBank/DDBJ databases">
        <authorList>
            <person name="Stapleton M."/>
            <person name="Carlson J.W."/>
            <person name="Chavez C."/>
            <person name="Frise E."/>
            <person name="George R.A."/>
            <person name="Pacleb J.M."/>
            <person name="Park S."/>
            <person name="Wan K.H."/>
            <person name="Yu C."/>
            <person name="Celniker S.E."/>
        </authorList>
    </citation>
    <scope>NUCLEOTIDE SEQUENCE [LARGE SCALE MRNA]</scope>
    <source>
        <strain>Berkeley</strain>
    </source>
</reference>
<proteinExistence type="evidence at transcript level"/>
<keyword id="KW-0391">Immunity</keyword>
<keyword id="KW-0399">Innate immunity</keyword>
<keyword id="KW-1185">Reference proteome</keyword>
<keyword id="KW-0964">Secreted</keyword>
<keyword id="KW-0732">Signal</keyword>
<comment type="function">
    <text evidence="2">A humoral factor that may play a role in stress tolerance.</text>
</comment>
<comment type="subcellular location">
    <subcellularLocation>
        <location evidence="2 3">Secreted</location>
    </subcellularLocation>
</comment>
<comment type="developmental stage">
    <text evidence="2">Expressed in late stage embryos. Disappears by early larval states and reappears in the third larval instar. Subsequently maintained throughout pupal development until adulthood.</text>
</comment>
<comment type="induction">
    <text evidence="2">By a variety of stressful conditions including bacterial infection, heat shock and exposure to ultraviolet light.</text>
</comment>
<comment type="similarity">
    <text evidence="1">Belongs to the Turandot family.</text>
</comment>
<name>TOTC_DROME</name>
<protein>
    <recommendedName>
        <fullName>Protein Turandot C</fullName>
    </recommendedName>
</protein>
<dbReference type="EMBL" id="AY035989">
    <property type="protein sequence ID" value="AAK64522.1"/>
    <property type="molecule type" value="mRNA"/>
</dbReference>
<dbReference type="EMBL" id="AE014297">
    <property type="protein sequence ID" value="AAN13841.1"/>
    <property type="molecule type" value="Genomic_DNA"/>
</dbReference>
<dbReference type="EMBL" id="BT023305">
    <property type="protein sequence ID" value="AAY55721.1"/>
    <property type="molecule type" value="mRNA"/>
</dbReference>
<dbReference type="RefSeq" id="NP_536779.2">
    <property type="nucleotide sequence ID" value="NM_080518.3"/>
</dbReference>
<dbReference type="SMR" id="Q8IN43"/>
<dbReference type="BioGRID" id="72896">
    <property type="interactions" value="1"/>
</dbReference>
<dbReference type="FunCoup" id="Q8IN43">
    <property type="interactions" value="17"/>
</dbReference>
<dbReference type="IntAct" id="Q8IN43">
    <property type="interactions" value="17"/>
</dbReference>
<dbReference type="STRING" id="7227.FBpp0083379"/>
<dbReference type="PaxDb" id="7227-FBpp0083379"/>
<dbReference type="DNASU" id="117462"/>
<dbReference type="EnsemblMetazoa" id="FBtr0083972">
    <property type="protein sequence ID" value="FBpp0083379"/>
    <property type="gene ID" value="FBgn0044812"/>
</dbReference>
<dbReference type="GeneID" id="117462"/>
<dbReference type="KEGG" id="dme:Dmel_CG31508"/>
<dbReference type="UCSC" id="CG31508-RA">
    <property type="organism name" value="d. melanogaster"/>
</dbReference>
<dbReference type="AGR" id="FB:FBgn0044812"/>
<dbReference type="CTD" id="117462"/>
<dbReference type="FlyBase" id="FBgn0044812">
    <property type="gene designation" value="TotC"/>
</dbReference>
<dbReference type="VEuPathDB" id="VectorBase:FBgn0044812"/>
<dbReference type="GeneTree" id="ENSGT00940000176310"/>
<dbReference type="HOGENOM" id="CLU_152780_0_0_1"/>
<dbReference type="InParanoid" id="Q8IN43"/>
<dbReference type="OMA" id="AYFFQWF"/>
<dbReference type="OrthoDB" id="7861285at2759"/>
<dbReference type="PhylomeDB" id="Q8IN43"/>
<dbReference type="GenomeRNAi" id="117462"/>
<dbReference type="PRO" id="PR:Q8IN43"/>
<dbReference type="Proteomes" id="UP000000803">
    <property type="component" value="Chromosome 3R"/>
</dbReference>
<dbReference type="Bgee" id="FBgn0044812">
    <property type="expression patterns" value="Expressed in fat body cell in arthropod fat body and 47 other cell types or tissues"/>
</dbReference>
<dbReference type="ExpressionAtlas" id="Q8IN43">
    <property type="expression patterns" value="baseline and differential"/>
</dbReference>
<dbReference type="GO" id="GO:0005576">
    <property type="term" value="C:extracellular region"/>
    <property type="evidence" value="ECO:0000255"/>
    <property type="project" value="FlyBase"/>
</dbReference>
<dbReference type="GO" id="GO:0005615">
    <property type="term" value="C:extracellular space"/>
    <property type="evidence" value="ECO:0000314"/>
    <property type="project" value="UniProtKB"/>
</dbReference>
<dbReference type="GO" id="GO:0034605">
    <property type="term" value="P:cellular response to heat"/>
    <property type="evidence" value="ECO:0000270"/>
    <property type="project" value="FlyBase"/>
</dbReference>
<dbReference type="GO" id="GO:0034644">
    <property type="term" value="P:cellular response to UV"/>
    <property type="evidence" value="ECO:0000270"/>
    <property type="project" value="FlyBase"/>
</dbReference>
<dbReference type="GO" id="GO:0045087">
    <property type="term" value="P:innate immune response"/>
    <property type="evidence" value="ECO:0007669"/>
    <property type="project" value="UniProtKB-KW"/>
</dbReference>
<dbReference type="GO" id="GO:0009617">
    <property type="term" value="P:response to bacterium"/>
    <property type="evidence" value="ECO:0000270"/>
    <property type="project" value="FlyBase"/>
</dbReference>
<dbReference type="GO" id="GO:0009408">
    <property type="term" value="P:response to heat"/>
    <property type="evidence" value="ECO:0000314"/>
    <property type="project" value="UniProtKB"/>
</dbReference>
<dbReference type="GO" id="GO:0006979">
    <property type="term" value="P:response to oxidative stress"/>
    <property type="evidence" value="ECO:0000314"/>
    <property type="project" value="UniProtKB"/>
</dbReference>
<dbReference type="GO" id="GO:0009411">
    <property type="term" value="P:response to UV"/>
    <property type="evidence" value="ECO:0000314"/>
    <property type="project" value="UniProtKB"/>
</dbReference>
<dbReference type="InterPro" id="IPR010825">
    <property type="entry name" value="Turandot"/>
</dbReference>
<dbReference type="Pfam" id="PF07240">
    <property type="entry name" value="Turandot"/>
    <property type="match status" value="1"/>
</dbReference>
<feature type="signal peptide" evidence="1">
    <location>
        <begin position="1"/>
        <end position="21"/>
    </location>
</feature>
<feature type="chain" id="PRO_0000354984" description="Protein Turandot C">
    <location>
        <begin position="22"/>
        <end position="129"/>
    </location>
</feature>
<evidence type="ECO:0000255" key="1"/>
<evidence type="ECO:0000269" key="2">
    <source>
    </source>
</evidence>
<evidence type="ECO:0000305" key="3"/>
<evidence type="ECO:0000312" key="4">
    <source>
        <dbReference type="EMBL" id="AAK64522.1"/>
    </source>
</evidence>
<evidence type="ECO:0000312" key="5">
    <source>
        <dbReference type="EMBL" id="AAN13841.1"/>
    </source>
</evidence>
<evidence type="ECO:0000312" key="6">
    <source>
        <dbReference type="EMBL" id="AAY55721.1"/>
    </source>
</evidence>
<evidence type="ECO:0000312" key="7">
    <source>
        <dbReference type="FlyBase" id="FBgn0044812"/>
    </source>
</evidence>
<sequence length="129" mass="14296">MNASISLLCLALLLISPFCLGYSDEERESDSLRVAEIIRTSNDAESKINRTQELLDIFRRLTPTLSPEQREKIERSIQEHTDEILIDGVPSQGGRKTKYVGKILSPVAQGLAVGFFEELGGSLSRLFTG</sequence>
<gene>
    <name evidence="5 7" type="primary">TotC</name>
    <name type="ORF">CG31508</name>
</gene>
<organism>
    <name type="scientific">Drosophila melanogaster</name>
    <name type="common">Fruit fly</name>
    <dbReference type="NCBI Taxonomy" id="7227"/>
    <lineage>
        <taxon>Eukaryota</taxon>
        <taxon>Metazoa</taxon>
        <taxon>Ecdysozoa</taxon>
        <taxon>Arthropoda</taxon>
        <taxon>Hexapoda</taxon>
        <taxon>Insecta</taxon>
        <taxon>Pterygota</taxon>
        <taxon>Neoptera</taxon>
        <taxon>Endopterygota</taxon>
        <taxon>Diptera</taxon>
        <taxon>Brachycera</taxon>
        <taxon>Muscomorpha</taxon>
        <taxon>Ephydroidea</taxon>
        <taxon>Drosophilidae</taxon>
        <taxon>Drosophila</taxon>
        <taxon>Sophophora</taxon>
    </lineage>
</organism>